<proteinExistence type="inferred from homology"/>
<keyword id="KW-0067">ATP-binding</keyword>
<keyword id="KW-0319">Glycerol metabolism</keyword>
<keyword id="KW-0418">Kinase</keyword>
<keyword id="KW-0547">Nucleotide-binding</keyword>
<keyword id="KW-0597">Phosphoprotein</keyword>
<keyword id="KW-0808">Transferase</keyword>
<reference key="1">
    <citation type="journal article" date="2001" name="Science">
        <title>Comparative genomics of Listeria species.</title>
        <authorList>
            <person name="Glaser P."/>
            <person name="Frangeul L."/>
            <person name="Buchrieser C."/>
            <person name="Rusniok C."/>
            <person name="Amend A."/>
            <person name="Baquero F."/>
            <person name="Berche P."/>
            <person name="Bloecker H."/>
            <person name="Brandt P."/>
            <person name="Chakraborty T."/>
            <person name="Charbit A."/>
            <person name="Chetouani F."/>
            <person name="Couve E."/>
            <person name="de Daruvar A."/>
            <person name="Dehoux P."/>
            <person name="Domann E."/>
            <person name="Dominguez-Bernal G."/>
            <person name="Duchaud E."/>
            <person name="Durant L."/>
            <person name="Dussurget O."/>
            <person name="Entian K.-D."/>
            <person name="Fsihi H."/>
            <person name="Garcia-del Portillo F."/>
            <person name="Garrido P."/>
            <person name="Gautier L."/>
            <person name="Goebel W."/>
            <person name="Gomez-Lopez N."/>
            <person name="Hain T."/>
            <person name="Hauf J."/>
            <person name="Jackson D."/>
            <person name="Jones L.-M."/>
            <person name="Kaerst U."/>
            <person name="Kreft J."/>
            <person name="Kuhn M."/>
            <person name="Kunst F."/>
            <person name="Kurapkat G."/>
            <person name="Madueno E."/>
            <person name="Maitournam A."/>
            <person name="Mata Vicente J."/>
            <person name="Ng E."/>
            <person name="Nedjari H."/>
            <person name="Nordsiek G."/>
            <person name="Novella S."/>
            <person name="de Pablos B."/>
            <person name="Perez-Diaz J.-C."/>
            <person name="Purcell R."/>
            <person name="Remmel B."/>
            <person name="Rose M."/>
            <person name="Schlueter T."/>
            <person name="Simoes N."/>
            <person name="Tierrez A."/>
            <person name="Vazquez-Boland J.-A."/>
            <person name="Voss H."/>
            <person name="Wehland J."/>
            <person name="Cossart P."/>
        </authorList>
    </citation>
    <scope>NUCLEOTIDE SEQUENCE [LARGE SCALE GENOMIC DNA]</scope>
    <source>
        <strain>ATCC BAA-680 / CLIP 11262</strain>
    </source>
</reference>
<organism>
    <name type="scientific">Listeria innocua serovar 6a (strain ATCC BAA-680 / CLIP 11262)</name>
    <dbReference type="NCBI Taxonomy" id="272626"/>
    <lineage>
        <taxon>Bacteria</taxon>
        <taxon>Bacillati</taxon>
        <taxon>Bacillota</taxon>
        <taxon>Bacilli</taxon>
        <taxon>Bacillales</taxon>
        <taxon>Listeriaceae</taxon>
        <taxon>Listeria</taxon>
    </lineage>
</organism>
<gene>
    <name evidence="1" type="primary">glpK</name>
    <name type="ordered locus">lin1573</name>
</gene>
<name>GLPK_LISIN</name>
<evidence type="ECO:0000255" key="1">
    <source>
        <dbReference type="HAMAP-Rule" id="MF_00186"/>
    </source>
</evidence>
<dbReference type="EC" id="2.7.1.30" evidence="1"/>
<dbReference type="EMBL" id="AL596169">
    <property type="protein sequence ID" value="CAC96804.1"/>
    <property type="molecule type" value="Genomic_DNA"/>
</dbReference>
<dbReference type="PIR" id="AD1629">
    <property type="entry name" value="AD1629"/>
</dbReference>
<dbReference type="RefSeq" id="WP_003771956.1">
    <property type="nucleotide sequence ID" value="NC_003212.1"/>
</dbReference>
<dbReference type="SMR" id="Q92BH6"/>
<dbReference type="STRING" id="272626.gene:17565904"/>
<dbReference type="KEGG" id="lin:lin1573"/>
<dbReference type="eggNOG" id="COG0554">
    <property type="taxonomic scope" value="Bacteria"/>
</dbReference>
<dbReference type="HOGENOM" id="CLU_009281_2_3_9"/>
<dbReference type="OrthoDB" id="9805576at2"/>
<dbReference type="UniPathway" id="UPA00618">
    <property type="reaction ID" value="UER00672"/>
</dbReference>
<dbReference type="Proteomes" id="UP000002513">
    <property type="component" value="Chromosome"/>
</dbReference>
<dbReference type="GO" id="GO:0005829">
    <property type="term" value="C:cytosol"/>
    <property type="evidence" value="ECO:0007669"/>
    <property type="project" value="TreeGrafter"/>
</dbReference>
<dbReference type="GO" id="GO:0005524">
    <property type="term" value="F:ATP binding"/>
    <property type="evidence" value="ECO:0007669"/>
    <property type="project" value="UniProtKB-UniRule"/>
</dbReference>
<dbReference type="GO" id="GO:0004370">
    <property type="term" value="F:glycerol kinase activity"/>
    <property type="evidence" value="ECO:0000250"/>
    <property type="project" value="UniProtKB"/>
</dbReference>
<dbReference type="GO" id="GO:0019563">
    <property type="term" value="P:glycerol catabolic process"/>
    <property type="evidence" value="ECO:0007669"/>
    <property type="project" value="UniProtKB-UniRule"/>
</dbReference>
<dbReference type="GO" id="GO:0006071">
    <property type="term" value="P:glycerol metabolic process"/>
    <property type="evidence" value="ECO:0000250"/>
    <property type="project" value="UniProtKB"/>
</dbReference>
<dbReference type="GO" id="GO:0006072">
    <property type="term" value="P:glycerol-3-phosphate metabolic process"/>
    <property type="evidence" value="ECO:0007669"/>
    <property type="project" value="InterPro"/>
</dbReference>
<dbReference type="CDD" id="cd07786">
    <property type="entry name" value="FGGY_EcGK_like"/>
    <property type="match status" value="1"/>
</dbReference>
<dbReference type="FunFam" id="3.30.420.40:FF:000007">
    <property type="entry name" value="Glycerol kinase"/>
    <property type="match status" value="1"/>
</dbReference>
<dbReference type="FunFam" id="3.30.420.40:FF:000008">
    <property type="entry name" value="Glycerol kinase"/>
    <property type="match status" value="1"/>
</dbReference>
<dbReference type="Gene3D" id="3.30.420.40">
    <property type="match status" value="2"/>
</dbReference>
<dbReference type="HAMAP" id="MF_00186">
    <property type="entry name" value="Glycerol_kin"/>
    <property type="match status" value="1"/>
</dbReference>
<dbReference type="InterPro" id="IPR043129">
    <property type="entry name" value="ATPase_NBD"/>
</dbReference>
<dbReference type="InterPro" id="IPR000577">
    <property type="entry name" value="Carb_kinase_FGGY"/>
</dbReference>
<dbReference type="InterPro" id="IPR018483">
    <property type="entry name" value="Carb_kinase_FGGY_CS"/>
</dbReference>
<dbReference type="InterPro" id="IPR018485">
    <property type="entry name" value="FGGY_C"/>
</dbReference>
<dbReference type="InterPro" id="IPR018484">
    <property type="entry name" value="FGGY_N"/>
</dbReference>
<dbReference type="InterPro" id="IPR005999">
    <property type="entry name" value="Glycerol_kin"/>
</dbReference>
<dbReference type="NCBIfam" id="TIGR01311">
    <property type="entry name" value="glycerol_kin"/>
    <property type="match status" value="1"/>
</dbReference>
<dbReference type="NCBIfam" id="NF000756">
    <property type="entry name" value="PRK00047.1"/>
    <property type="match status" value="1"/>
</dbReference>
<dbReference type="PANTHER" id="PTHR10196:SF69">
    <property type="entry name" value="GLYCEROL KINASE"/>
    <property type="match status" value="1"/>
</dbReference>
<dbReference type="PANTHER" id="PTHR10196">
    <property type="entry name" value="SUGAR KINASE"/>
    <property type="match status" value="1"/>
</dbReference>
<dbReference type="Pfam" id="PF02782">
    <property type="entry name" value="FGGY_C"/>
    <property type="match status" value="1"/>
</dbReference>
<dbReference type="Pfam" id="PF00370">
    <property type="entry name" value="FGGY_N"/>
    <property type="match status" value="1"/>
</dbReference>
<dbReference type="PIRSF" id="PIRSF000538">
    <property type="entry name" value="GlpK"/>
    <property type="match status" value="1"/>
</dbReference>
<dbReference type="SUPFAM" id="SSF53067">
    <property type="entry name" value="Actin-like ATPase domain"/>
    <property type="match status" value="2"/>
</dbReference>
<dbReference type="PROSITE" id="PS00445">
    <property type="entry name" value="FGGY_KINASES_2"/>
    <property type="match status" value="1"/>
</dbReference>
<protein>
    <recommendedName>
        <fullName evidence="1">Glycerol kinase</fullName>
        <ecNumber evidence="1">2.7.1.30</ecNumber>
    </recommendedName>
    <alternativeName>
        <fullName evidence="1">ATP:glycerol 3-phosphotransferase</fullName>
    </alternativeName>
    <alternativeName>
        <fullName evidence="1">Glycerokinase</fullName>
        <shortName evidence="1">GK</shortName>
    </alternativeName>
</protein>
<comment type="function">
    <text evidence="1">Key enzyme in the regulation of glycerol uptake and metabolism. Catalyzes the phosphorylation of glycerol to yield sn-glycerol 3-phosphate.</text>
</comment>
<comment type="catalytic activity">
    <reaction evidence="1">
        <text>glycerol + ATP = sn-glycerol 3-phosphate + ADP + H(+)</text>
        <dbReference type="Rhea" id="RHEA:21644"/>
        <dbReference type="ChEBI" id="CHEBI:15378"/>
        <dbReference type="ChEBI" id="CHEBI:17754"/>
        <dbReference type="ChEBI" id="CHEBI:30616"/>
        <dbReference type="ChEBI" id="CHEBI:57597"/>
        <dbReference type="ChEBI" id="CHEBI:456216"/>
        <dbReference type="EC" id="2.7.1.30"/>
    </reaction>
</comment>
<comment type="activity regulation">
    <text evidence="1">Activated by phosphorylation and inhibited by fructose 1,6-bisphosphate (FBP).</text>
</comment>
<comment type="pathway">
    <text evidence="1">Polyol metabolism; glycerol degradation via glycerol kinase pathway; sn-glycerol 3-phosphate from glycerol: step 1/1.</text>
</comment>
<comment type="subunit">
    <text evidence="1">Homotetramer and homodimer (in equilibrium).</text>
</comment>
<comment type="PTM">
    <text evidence="1">The phosphoenolpyruvate-dependent sugar phosphotransferase system (PTS), including enzyme I, and histidine-containing protein (HPr) are required for the phosphorylation, which leads to the activation of the enzyme.</text>
</comment>
<comment type="similarity">
    <text evidence="1">Belongs to the FGGY kinase family.</text>
</comment>
<feature type="chain" id="PRO_0000059463" description="Glycerol kinase">
    <location>
        <begin position="1"/>
        <end position="497"/>
    </location>
</feature>
<feature type="binding site" evidence="1">
    <location>
        <position position="13"/>
    </location>
    <ligand>
        <name>ADP</name>
        <dbReference type="ChEBI" id="CHEBI:456216"/>
    </ligand>
</feature>
<feature type="binding site" evidence="1">
    <location>
        <position position="13"/>
    </location>
    <ligand>
        <name>ATP</name>
        <dbReference type="ChEBI" id="CHEBI:30616"/>
    </ligand>
</feature>
<feature type="binding site" evidence="1">
    <location>
        <position position="13"/>
    </location>
    <ligand>
        <name>sn-glycerol 3-phosphate</name>
        <dbReference type="ChEBI" id="CHEBI:57597"/>
    </ligand>
</feature>
<feature type="binding site" evidence="1">
    <location>
        <position position="14"/>
    </location>
    <ligand>
        <name>ATP</name>
        <dbReference type="ChEBI" id="CHEBI:30616"/>
    </ligand>
</feature>
<feature type="binding site" evidence="1">
    <location>
        <position position="15"/>
    </location>
    <ligand>
        <name>ATP</name>
        <dbReference type="ChEBI" id="CHEBI:30616"/>
    </ligand>
</feature>
<feature type="binding site" evidence="1">
    <location>
        <position position="17"/>
    </location>
    <ligand>
        <name>ADP</name>
        <dbReference type="ChEBI" id="CHEBI:456216"/>
    </ligand>
</feature>
<feature type="binding site" evidence="1">
    <location>
        <position position="83"/>
    </location>
    <ligand>
        <name>glycerol</name>
        <dbReference type="ChEBI" id="CHEBI:17754"/>
    </ligand>
</feature>
<feature type="binding site" evidence="1">
    <location>
        <position position="83"/>
    </location>
    <ligand>
        <name>sn-glycerol 3-phosphate</name>
        <dbReference type="ChEBI" id="CHEBI:57597"/>
    </ligand>
</feature>
<feature type="binding site" evidence="1">
    <location>
        <position position="84"/>
    </location>
    <ligand>
        <name>glycerol</name>
        <dbReference type="ChEBI" id="CHEBI:17754"/>
    </ligand>
</feature>
<feature type="binding site" evidence="1">
    <location>
        <position position="84"/>
    </location>
    <ligand>
        <name>sn-glycerol 3-phosphate</name>
        <dbReference type="ChEBI" id="CHEBI:57597"/>
    </ligand>
</feature>
<feature type="binding site" evidence="1">
    <location>
        <position position="135"/>
    </location>
    <ligand>
        <name>glycerol</name>
        <dbReference type="ChEBI" id="CHEBI:17754"/>
    </ligand>
</feature>
<feature type="binding site" evidence="1">
    <location>
        <position position="135"/>
    </location>
    <ligand>
        <name>sn-glycerol 3-phosphate</name>
        <dbReference type="ChEBI" id="CHEBI:57597"/>
    </ligand>
</feature>
<feature type="binding site" evidence="1">
    <location>
        <position position="245"/>
    </location>
    <ligand>
        <name>glycerol</name>
        <dbReference type="ChEBI" id="CHEBI:17754"/>
    </ligand>
</feature>
<feature type="binding site" evidence="1">
    <location>
        <position position="245"/>
    </location>
    <ligand>
        <name>sn-glycerol 3-phosphate</name>
        <dbReference type="ChEBI" id="CHEBI:57597"/>
    </ligand>
</feature>
<feature type="binding site" evidence="1">
    <location>
        <position position="246"/>
    </location>
    <ligand>
        <name>glycerol</name>
        <dbReference type="ChEBI" id="CHEBI:17754"/>
    </ligand>
</feature>
<feature type="binding site" evidence="1">
    <location>
        <position position="267"/>
    </location>
    <ligand>
        <name>ADP</name>
        <dbReference type="ChEBI" id="CHEBI:456216"/>
    </ligand>
</feature>
<feature type="binding site" evidence="1">
    <location>
        <position position="267"/>
    </location>
    <ligand>
        <name>ATP</name>
        <dbReference type="ChEBI" id="CHEBI:30616"/>
    </ligand>
</feature>
<feature type="binding site" evidence="1">
    <location>
        <position position="310"/>
    </location>
    <ligand>
        <name>ADP</name>
        <dbReference type="ChEBI" id="CHEBI:456216"/>
    </ligand>
</feature>
<feature type="binding site" evidence="1">
    <location>
        <position position="310"/>
    </location>
    <ligand>
        <name>ATP</name>
        <dbReference type="ChEBI" id="CHEBI:30616"/>
    </ligand>
</feature>
<feature type="binding site" evidence="1">
    <location>
        <position position="314"/>
    </location>
    <ligand>
        <name>ATP</name>
        <dbReference type="ChEBI" id="CHEBI:30616"/>
    </ligand>
</feature>
<feature type="binding site" evidence="1">
    <location>
        <position position="411"/>
    </location>
    <ligand>
        <name>ADP</name>
        <dbReference type="ChEBI" id="CHEBI:456216"/>
    </ligand>
</feature>
<feature type="binding site" evidence="1">
    <location>
        <position position="411"/>
    </location>
    <ligand>
        <name>ATP</name>
        <dbReference type="ChEBI" id="CHEBI:30616"/>
    </ligand>
</feature>
<feature type="binding site" evidence="1">
    <location>
        <position position="415"/>
    </location>
    <ligand>
        <name>ADP</name>
        <dbReference type="ChEBI" id="CHEBI:456216"/>
    </ligand>
</feature>
<feature type="modified residue" description="Phosphohistidine; by HPr" evidence="1">
    <location>
        <position position="231"/>
    </location>
</feature>
<sequence length="497" mass="55436">MEKKYILALDQGTTSSRAMIIDEEGEVIGVAQEEFDQIFPKPGWVEHSANEIWASILAVIAGVLLKTNISSKEIAGIGITNQRETTVIWDKESGNPIYNAIVWQSRQTEDICKQLRKDGYEDTIRSKTGLLIDPYFAGTKARWILDHVDGAQERAEKGELLFGTIDTWLVWKLTGGRAHITDYSNASRTLLYNIYDLEWDDELLKMLNIPRAMLPEVRPSSEVYADTVPYHFFGEEVPVAGIAGDQQAALFGQGCFEKGMAKNTYGTGCFLLMNTGEKAVRSENGLLTTLAWGLDGKVEYALEGSIFVAGSAIQWLRDGLRMVRQSSDSENYASRIESSDGVYVVPAFVGLGAPYWDSDVRGAVFGLTRGTEKEQFIRATLESLAYQTRDVLYAMEQDSGISLKTLRVDGGASANNFLMQFQSDILGVPVERPENKETTVLGAAFLAGLAVGVWKDKNEIKKHWKLDKRFEVEMKDDQREDLYEGWHKAVKAAQAFK</sequence>
<accession>Q92BH6</accession>